<keyword id="KW-1185">Reference proteome</keyword>
<keyword id="KW-0732">Signal</keyword>
<dbReference type="EMBL" id="AE000520">
    <property type="protein sequence ID" value="AAC65926.1"/>
    <property type="molecule type" value="Genomic_DNA"/>
</dbReference>
<dbReference type="PIR" id="C71260">
    <property type="entry name" value="C71260"/>
</dbReference>
<dbReference type="RefSeq" id="WP_010882412.1">
    <property type="nucleotide sequence ID" value="NC_021490.2"/>
</dbReference>
<dbReference type="IntAct" id="O83934">
    <property type="interactions" value="5"/>
</dbReference>
<dbReference type="STRING" id="243276.TP_0968"/>
<dbReference type="EnsemblBacteria" id="AAC65926">
    <property type="protein sequence ID" value="AAC65926"/>
    <property type="gene ID" value="TP_0968"/>
</dbReference>
<dbReference type="KEGG" id="tpa:TP_0968"/>
<dbReference type="KEGG" id="tpw:TPANIC_0968"/>
<dbReference type="HOGENOM" id="CLU_504256_0_0_12"/>
<dbReference type="Proteomes" id="UP000000811">
    <property type="component" value="Chromosome"/>
</dbReference>
<accession>O83934</accession>
<proteinExistence type="inferred from homology"/>
<feature type="signal peptide" evidence="1">
    <location>
        <begin position="1"/>
        <end position="20"/>
    </location>
</feature>
<feature type="chain" id="PRO_0000014268" description="Uncharacterized protein TP_0968">
    <location>
        <begin position="21"/>
        <end position="540"/>
    </location>
</feature>
<sequence length="540" mass="60063">MSVSYRGPRWSSFVHVSQHSCRFVAPTCAEGAQGCSEFGAFPVFEERGMCAARRMRRAAIAACCVFARGAAANPYQQLLRHRLEALRPGARAQIEFDVAHCGYEKARLRSAGTYVLGSELEIRGHSAGDFGLPRFGIKPIIGVRSPRYNNLVVSIDTARVTSIGNISRINADIGVDLYSNVRGRELIRMRRAEHEEKAAQNGERIKSPSVELALIDELEVLFTRAQSLVRREFHMGDARLVHLRTRAAGFSEHSEKARRVRLAYDRTQREFEQEERLFAQVCDPFAAVCAVGGGDEARRDFLLQLAEAVPREVPLSLVSLHATDAHSLAAAQEMALLERAAQRSERDLYAVRVGAVVSMGTRKTFILFKGDGTESLEGSGTVALHMPSVNAQVEVKVPYAERGKHSRDKVGVYGKSQWNPLEIAYKVFERREERAQEQEQEQYCEDSLARETRKMEGLEVQGKQLFAAQETALRTREALRLDLAKVERAAARGVVGGNRLARARCEYAVAQLRAACAKLHMLRFNLGVVRAFGLVPQVAP</sequence>
<organism>
    <name type="scientific">Treponema pallidum (strain Nichols)</name>
    <dbReference type="NCBI Taxonomy" id="243276"/>
    <lineage>
        <taxon>Bacteria</taxon>
        <taxon>Pseudomonadati</taxon>
        <taxon>Spirochaetota</taxon>
        <taxon>Spirochaetia</taxon>
        <taxon>Spirochaetales</taxon>
        <taxon>Treponemataceae</taxon>
        <taxon>Treponema</taxon>
    </lineage>
</organism>
<comment type="similarity">
    <text evidence="2">Belongs to the TP096X family.</text>
</comment>
<gene>
    <name type="ordered locus">TP_0968</name>
</gene>
<name>Y968_TREPA</name>
<evidence type="ECO:0000255" key="1"/>
<evidence type="ECO:0000305" key="2"/>
<protein>
    <recommendedName>
        <fullName>Uncharacterized protein TP_0968</fullName>
    </recommendedName>
</protein>
<reference key="1">
    <citation type="journal article" date="1998" name="Science">
        <title>Complete genome sequence of Treponema pallidum, the syphilis spirochete.</title>
        <authorList>
            <person name="Fraser C.M."/>
            <person name="Norris S.J."/>
            <person name="Weinstock G.M."/>
            <person name="White O."/>
            <person name="Sutton G.G."/>
            <person name="Dodson R.J."/>
            <person name="Gwinn M.L."/>
            <person name="Hickey E.K."/>
            <person name="Clayton R.A."/>
            <person name="Ketchum K.A."/>
            <person name="Sodergren E."/>
            <person name="Hardham J.M."/>
            <person name="McLeod M.P."/>
            <person name="Salzberg S.L."/>
            <person name="Peterson J.D."/>
            <person name="Khalak H.G."/>
            <person name="Richardson D.L."/>
            <person name="Howell J.K."/>
            <person name="Chidambaram M."/>
            <person name="Utterback T.R."/>
            <person name="McDonald L.A."/>
            <person name="Artiach P."/>
            <person name="Bowman C."/>
            <person name="Cotton M.D."/>
            <person name="Fujii C."/>
            <person name="Garland S.A."/>
            <person name="Hatch B."/>
            <person name="Horst K."/>
            <person name="Roberts K.M."/>
            <person name="Sandusky M."/>
            <person name="Weidman J.F."/>
            <person name="Smith H.O."/>
            <person name="Venter J.C."/>
        </authorList>
    </citation>
    <scope>NUCLEOTIDE SEQUENCE [LARGE SCALE GENOMIC DNA]</scope>
    <source>
        <strain>Nichols</strain>
    </source>
</reference>